<reference key="1">
    <citation type="journal article" date="2004" name="Environ. Microbiol.">
        <title>The genome of Desulfotalea psychrophila, a sulfate-reducing bacterium from permanently cold Arctic sediments.</title>
        <authorList>
            <person name="Rabus R."/>
            <person name="Ruepp A."/>
            <person name="Frickey T."/>
            <person name="Rattei T."/>
            <person name="Fartmann B."/>
            <person name="Stark M."/>
            <person name="Bauer M."/>
            <person name="Zibat A."/>
            <person name="Lombardot T."/>
            <person name="Becker I."/>
            <person name="Amann J."/>
            <person name="Gellner K."/>
            <person name="Teeling H."/>
            <person name="Leuschner W.D."/>
            <person name="Gloeckner F.-O."/>
            <person name="Lupas A.N."/>
            <person name="Amann R."/>
            <person name="Klenk H.-P."/>
        </authorList>
    </citation>
    <scope>NUCLEOTIDE SEQUENCE [LARGE SCALE GENOMIC DNA]</scope>
    <source>
        <strain>DSM 12343 / LSv54</strain>
    </source>
</reference>
<name>RL9_DESPS</name>
<feature type="chain" id="PRO_0000236517" description="Large ribosomal subunit protein bL9">
    <location>
        <begin position="1"/>
        <end position="151"/>
    </location>
</feature>
<accession>Q6AJZ9</accession>
<keyword id="KW-1185">Reference proteome</keyword>
<keyword id="KW-0687">Ribonucleoprotein</keyword>
<keyword id="KW-0689">Ribosomal protein</keyword>
<keyword id="KW-0694">RNA-binding</keyword>
<keyword id="KW-0699">rRNA-binding</keyword>
<organism>
    <name type="scientific">Desulfotalea psychrophila (strain LSv54 / DSM 12343)</name>
    <dbReference type="NCBI Taxonomy" id="177439"/>
    <lineage>
        <taxon>Bacteria</taxon>
        <taxon>Pseudomonadati</taxon>
        <taxon>Thermodesulfobacteriota</taxon>
        <taxon>Desulfobulbia</taxon>
        <taxon>Desulfobulbales</taxon>
        <taxon>Desulfocapsaceae</taxon>
        <taxon>Desulfotalea</taxon>
    </lineage>
</organism>
<comment type="function">
    <text evidence="1">Binds to the 23S rRNA.</text>
</comment>
<comment type="similarity">
    <text evidence="1">Belongs to the bacterial ribosomal protein bL9 family.</text>
</comment>
<proteinExistence type="inferred from homology"/>
<dbReference type="EMBL" id="CR522870">
    <property type="protein sequence ID" value="CAG37327.1"/>
    <property type="molecule type" value="Genomic_DNA"/>
</dbReference>
<dbReference type="RefSeq" id="WP_011189839.1">
    <property type="nucleotide sequence ID" value="NC_006138.1"/>
</dbReference>
<dbReference type="SMR" id="Q6AJZ9"/>
<dbReference type="STRING" id="177439.DP2598"/>
<dbReference type="KEGG" id="dps:DP2598"/>
<dbReference type="eggNOG" id="COG0359">
    <property type="taxonomic scope" value="Bacteria"/>
</dbReference>
<dbReference type="HOGENOM" id="CLU_078938_3_0_7"/>
<dbReference type="OrthoDB" id="9788336at2"/>
<dbReference type="Proteomes" id="UP000000602">
    <property type="component" value="Chromosome"/>
</dbReference>
<dbReference type="GO" id="GO:1990904">
    <property type="term" value="C:ribonucleoprotein complex"/>
    <property type="evidence" value="ECO:0007669"/>
    <property type="project" value="UniProtKB-KW"/>
</dbReference>
<dbReference type="GO" id="GO:0005840">
    <property type="term" value="C:ribosome"/>
    <property type="evidence" value="ECO:0007669"/>
    <property type="project" value="UniProtKB-KW"/>
</dbReference>
<dbReference type="GO" id="GO:0019843">
    <property type="term" value="F:rRNA binding"/>
    <property type="evidence" value="ECO:0007669"/>
    <property type="project" value="UniProtKB-UniRule"/>
</dbReference>
<dbReference type="GO" id="GO:0003735">
    <property type="term" value="F:structural constituent of ribosome"/>
    <property type="evidence" value="ECO:0007669"/>
    <property type="project" value="InterPro"/>
</dbReference>
<dbReference type="GO" id="GO:0006412">
    <property type="term" value="P:translation"/>
    <property type="evidence" value="ECO:0007669"/>
    <property type="project" value="UniProtKB-UniRule"/>
</dbReference>
<dbReference type="Gene3D" id="3.10.430.100">
    <property type="entry name" value="Ribosomal protein L9, C-terminal domain"/>
    <property type="match status" value="1"/>
</dbReference>
<dbReference type="Gene3D" id="3.40.5.10">
    <property type="entry name" value="Ribosomal protein L9, N-terminal domain"/>
    <property type="match status" value="1"/>
</dbReference>
<dbReference type="HAMAP" id="MF_00503">
    <property type="entry name" value="Ribosomal_bL9"/>
    <property type="match status" value="1"/>
</dbReference>
<dbReference type="InterPro" id="IPR000244">
    <property type="entry name" value="Ribosomal_bL9"/>
</dbReference>
<dbReference type="InterPro" id="IPR009027">
    <property type="entry name" value="Ribosomal_bL9/RNase_H1_N"/>
</dbReference>
<dbReference type="InterPro" id="IPR020594">
    <property type="entry name" value="Ribosomal_bL9_bac/chp"/>
</dbReference>
<dbReference type="InterPro" id="IPR020069">
    <property type="entry name" value="Ribosomal_bL9_C"/>
</dbReference>
<dbReference type="InterPro" id="IPR036791">
    <property type="entry name" value="Ribosomal_bL9_C_sf"/>
</dbReference>
<dbReference type="InterPro" id="IPR020070">
    <property type="entry name" value="Ribosomal_bL9_N"/>
</dbReference>
<dbReference type="InterPro" id="IPR036935">
    <property type="entry name" value="Ribosomal_bL9_N_sf"/>
</dbReference>
<dbReference type="NCBIfam" id="TIGR00158">
    <property type="entry name" value="L9"/>
    <property type="match status" value="1"/>
</dbReference>
<dbReference type="PANTHER" id="PTHR21368">
    <property type="entry name" value="50S RIBOSOMAL PROTEIN L9"/>
    <property type="match status" value="1"/>
</dbReference>
<dbReference type="Pfam" id="PF03948">
    <property type="entry name" value="Ribosomal_L9_C"/>
    <property type="match status" value="1"/>
</dbReference>
<dbReference type="Pfam" id="PF01281">
    <property type="entry name" value="Ribosomal_L9_N"/>
    <property type="match status" value="1"/>
</dbReference>
<dbReference type="SUPFAM" id="SSF55658">
    <property type="entry name" value="L9 N-domain-like"/>
    <property type="match status" value="1"/>
</dbReference>
<dbReference type="SUPFAM" id="SSF55653">
    <property type="entry name" value="Ribosomal protein L9 C-domain"/>
    <property type="match status" value="1"/>
</dbReference>
<dbReference type="PROSITE" id="PS00651">
    <property type="entry name" value="RIBOSOMAL_L9"/>
    <property type="match status" value="1"/>
</dbReference>
<protein>
    <recommendedName>
        <fullName evidence="1">Large ribosomal subunit protein bL9</fullName>
    </recommendedName>
    <alternativeName>
        <fullName evidence="2">50S ribosomal protein L9</fullName>
    </alternativeName>
</protein>
<gene>
    <name evidence="1" type="primary">rplI</name>
    <name type="ordered locus">DP2598</name>
</gene>
<sequence length="151" mass="16119">MKLILKETISTLGREGDLIDVKAGYGRNYLLPQGKAVLATATNVAELEKNQAEIQAKIAKETAIAEKVAEKLQAINLVIEQLAGDDGRLFGSVTNSDICAALAAQDIVLDKRQIILPDPIKTVSETPVLIKVGFQVATEVVVKVVPLSTKA</sequence>
<evidence type="ECO:0000255" key="1">
    <source>
        <dbReference type="HAMAP-Rule" id="MF_00503"/>
    </source>
</evidence>
<evidence type="ECO:0000305" key="2"/>